<reference key="1">
    <citation type="journal article" date="2006" name="Genome Res.">
        <title>Skewed genomic variability in strains of the toxigenic bacterial pathogen, Clostridium perfringens.</title>
        <authorList>
            <person name="Myers G.S.A."/>
            <person name="Rasko D.A."/>
            <person name="Cheung J.K."/>
            <person name="Ravel J."/>
            <person name="Seshadri R."/>
            <person name="DeBoy R.T."/>
            <person name="Ren Q."/>
            <person name="Varga J."/>
            <person name="Awad M.M."/>
            <person name="Brinkac L.M."/>
            <person name="Daugherty S.C."/>
            <person name="Haft D.H."/>
            <person name="Dodson R.J."/>
            <person name="Madupu R."/>
            <person name="Nelson W.C."/>
            <person name="Rosovitz M.J."/>
            <person name="Sullivan S.A."/>
            <person name="Khouri H."/>
            <person name="Dimitrov G.I."/>
            <person name="Watkins K.L."/>
            <person name="Mulligan S."/>
            <person name="Benton J."/>
            <person name="Radune D."/>
            <person name="Fisher D.J."/>
            <person name="Atkins H.S."/>
            <person name="Hiscox T."/>
            <person name="Jost B.H."/>
            <person name="Billington S.J."/>
            <person name="Songer J.G."/>
            <person name="McClane B.A."/>
            <person name="Titball R.W."/>
            <person name="Rood J.I."/>
            <person name="Melville S.B."/>
            <person name="Paulsen I.T."/>
        </authorList>
    </citation>
    <scope>NUCLEOTIDE SEQUENCE [LARGE SCALE GENOMIC DNA]</scope>
    <source>
        <strain>SM101 / Type A</strain>
    </source>
</reference>
<feature type="chain" id="PRO_0000262009" description="UPF0246 protein CPR_2119">
    <location>
        <begin position="1"/>
        <end position="254"/>
    </location>
</feature>
<organism>
    <name type="scientific">Clostridium perfringens (strain SM101 / Type A)</name>
    <dbReference type="NCBI Taxonomy" id="289380"/>
    <lineage>
        <taxon>Bacteria</taxon>
        <taxon>Bacillati</taxon>
        <taxon>Bacillota</taxon>
        <taxon>Clostridia</taxon>
        <taxon>Eubacteriales</taxon>
        <taxon>Clostridiaceae</taxon>
        <taxon>Clostridium</taxon>
    </lineage>
</organism>
<proteinExistence type="inferred from homology"/>
<sequence length="254" mass="29396">MIALLSPAKTLDLTKPNLDIETSKPIFISEAEVIMNNLKELEIQDLCPLMKISEDLGVQTFTKIQDWNTIYYGDEKPFVLSFKGEAYRGLDADDFTKEDLEFCNDSLRILSGLYGALKPLDGTKAYRLEMGTKISIDGSKNLYDFWGNKIMDSLLKDLENHKEKVIINLASNEYYKSIKQIDKKVRVITPVFKERKGIEYKVVTVYAKKARGQMVRYITKNRITKSEDLKNFDLYGYEFNERLSEGDTWVFTRD</sequence>
<comment type="similarity">
    <text evidence="1">Belongs to the UPF0246 family.</text>
</comment>
<gene>
    <name type="ordered locus">CPR_2119</name>
</gene>
<accession>Q0SR29</accession>
<protein>
    <recommendedName>
        <fullName evidence="1">UPF0246 protein CPR_2119</fullName>
    </recommendedName>
</protein>
<dbReference type="EMBL" id="CP000312">
    <property type="protein sequence ID" value="ABG85773.1"/>
    <property type="molecule type" value="Genomic_DNA"/>
</dbReference>
<dbReference type="RefSeq" id="WP_011592955.1">
    <property type="nucleotide sequence ID" value="NC_008262.1"/>
</dbReference>
<dbReference type="SMR" id="Q0SR29"/>
<dbReference type="KEGG" id="cpr:CPR_2119"/>
<dbReference type="BioCyc" id="CPER289380:GI76-2130-MONOMER"/>
<dbReference type="Proteomes" id="UP000001824">
    <property type="component" value="Chromosome"/>
</dbReference>
<dbReference type="GO" id="GO:0005829">
    <property type="term" value="C:cytosol"/>
    <property type="evidence" value="ECO:0007669"/>
    <property type="project" value="TreeGrafter"/>
</dbReference>
<dbReference type="GO" id="GO:0033194">
    <property type="term" value="P:response to hydroperoxide"/>
    <property type="evidence" value="ECO:0007669"/>
    <property type="project" value="TreeGrafter"/>
</dbReference>
<dbReference type="HAMAP" id="MF_00652">
    <property type="entry name" value="UPF0246"/>
    <property type="match status" value="1"/>
</dbReference>
<dbReference type="InterPro" id="IPR005583">
    <property type="entry name" value="YaaA"/>
</dbReference>
<dbReference type="NCBIfam" id="NF002542">
    <property type="entry name" value="PRK02101.1-3"/>
    <property type="match status" value="1"/>
</dbReference>
<dbReference type="PANTHER" id="PTHR30283:SF4">
    <property type="entry name" value="PEROXIDE STRESS RESISTANCE PROTEIN YAAA"/>
    <property type="match status" value="1"/>
</dbReference>
<dbReference type="PANTHER" id="PTHR30283">
    <property type="entry name" value="PEROXIDE STRESS RESPONSE PROTEIN YAAA"/>
    <property type="match status" value="1"/>
</dbReference>
<dbReference type="Pfam" id="PF03883">
    <property type="entry name" value="H2O2_YaaD"/>
    <property type="match status" value="1"/>
</dbReference>
<evidence type="ECO:0000255" key="1">
    <source>
        <dbReference type="HAMAP-Rule" id="MF_00652"/>
    </source>
</evidence>
<name>Y2119_CLOPS</name>